<feature type="chain" id="PRO_0000226028" description="Chaperone protein DnaK">
    <location>
        <begin position="1"/>
        <end position="640"/>
    </location>
</feature>
<feature type="region of interest" description="Disordered" evidence="2">
    <location>
        <begin position="537"/>
        <end position="556"/>
    </location>
</feature>
<feature type="region of interest" description="Disordered" evidence="2">
    <location>
        <begin position="596"/>
        <end position="640"/>
    </location>
</feature>
<feature type="compositionally biased region" description="Basic and acidic residues" evidence="2">
    <location>
        <begin position="539"/>
        <end position="556"/>
    </location>
</feature>
<feature type="compositionally biased region" description="Polar residues" evidence="2">
    <location>
        <begin position="600"/>
        <end position="617"/>
    </location>
</feature>
<feature type="compositionally biased region" description="Basic and acidic residues" evidence="2">
    <location>
        <begin position="618"/>
        <end position="640"/>
    </location>
</feature>
<feature type="modified residue" description="Phosphothreonine; by autocatalysis" evidence="1">
    <location>
        <position position="197"/>
    </location>
</feature>
<evidence type="ECO:0000255" key="1">
    <source>
        <dbReference type="HAMAP-Rule" id="MF_00332"/>
    </source>
</evidence>
<evidence type="ECO:0000256" key="2">
    <source>
        <dbReference type="SAM" id="MobiDB-lite"/>
    </source>
</evidence>
<sequence>MGRAIGIDLGTTNSCVAIMQGKDTKVIENKEGARTTPSIVALTSSGERLIGAPAKRQATTNASNTFFATKRLIGRQYSDPEMKNLSVPYKVFAAKSGDAWVKTTDNKEYSPSQIGAFILQNMKEAAEAYLGEEVKDAVITVPAYFNDSQRQATKDAGKIAGLNVLRIVNEPTAAALAYGLDKKHGHTIVVYDLGGGTFDVSILEIGDGVFEVKATNGDTHLGGEDFDNGVVSYLLDEFKKSNGIDLKNDPMAMQRIKEAAEKAKIELSSAMETEINLPFITADASGPKHLNMKLTRAKLESLVNDLIERTMAPCKKALEDAGLSASQIGEVVLVGGMTRMPKVIEKVKEFFGKDPHRGVNPDEVVAIGAAIQAGIIQGDVRDVLLLDVTPLSLGIETLGGVFTPLIERNTTIPTKKSQVFSTAEDNQTAVTIKVHQGERKLAVDNKLLGQFSLEGIPPAPRGRPQIEVTFDIDANGIAHVSAKDKATGKEQKIRIQSSGGLSDNEINRMVKEAEEKAQEDEKRKKFIEVKNQADSLVHSTEKSLTEYGDKVSPEDRSAIENAVNELKEVSKSDNIDDADSIQQKVTNLSQLSMKLGEAMYQTSQQNSAENGFSSEGNPNDKEEKVVDSDYQDIDNKEENK</sequence>
<proteinExistence type="inferred from homology"/>
<keyword id="KW-0067">ATP-binding</keyword>
<keyword id="KW-0143">Chaperone</keyword>
<keyword id="KW-0547">Nucleotide-binding</keyword>
<keyword id="KW-0597">Phosphoprotein</keyword>
<keyword id="KW-0346">Stress response</keyword>
<accession>Q73GL7</accession>
<name>DNAK_WOLPM</name>
<dbReference type="EMBL" id="AE017196">
    <property type="protein sequence ID" value="AAS14599.1"/>
    <property type="molecule type" value="Genomic_DNA"/>
</dbReference>
<dbReference type="RefSeq" id="WP_010962930.1">
    <property type="nucleotide sequence ID" value="NZ_OX384529.1"/>
</dbReference>
<dbReference type="SMR" id="Q73GL7"/>
<dbReference type="EnsemblBacteria" id="AAS14599">
    <property type="protein sequence ID" value="AAS14599"/>
    <property type="gene ID" value="WD_0928"/>
</dbReference>
<dbReference type="GeneID" id="70036399"/>
<dbReference type="KEGG" id="wol:WD_0928"/>
<dbReference type="eggNOG" id="COG0443">
    <property type="taxonomic scope" value="Bacteria"/>
</dbReference>
<dbReference type="Proteomes" id="UP000008215">
    <property type="component" value="Chromosome"/>
</dbReference>
<dbReference type="GO" id="GO:0005524">
    <property type="term" value="F:ATP binding"/>
    <property type="evidence" value="ECO:0007669"/>
    <property type="project" value="UniProtKB-UniRule"/>
</dbReference>
<dbReference type="GO" id="GO:0140662">
    <property type="term" value="F:ATP-dependent protein folding chaperone"/>
    <property type="evidence" value="ECO:0007669"/>
    <property type="project" value="InterPro"/>
</dbReference>
<dbReference type="GO" id="GO:0051082">
    <property type="term" value="F:unfolded protein binding"/>
    <property type="evidence" value="ECO:0007669"/>
    <property type="project" value="InterPro"/>
</dbReference>
<dbReference type="CDD" id="cd10234">
    <property type="entry name" value="ASKHA_NBD_HSP70_DnaK-like"/>
    <property type="match status" value="1"/>
</dbReference>
<dbReference type="FunFam" id="2.60.34.10:FF:000014">
    <property type="entry name" value="Chaperone protein DnaK HSP70"/>
    <property type="match status" value="1"/>
</dbReference>
<dbReference type="FunFam" id="3.30.420.40:FF:000020">
    <property type="entry name" value="Chaperone protein HscA homolog"/>
    <property type="match status" value="1"/>
</dbReference>
<dbReference type="FunFam" id="3.30.30.30:FF:000003">
    <property type="entry name" value="Heat shock protein 9"/>
    <property type="match status" value="1"/>
</dbReference>
<dbReference type="FunFam" id="1.20.1270.10:FF:000001">
    <property type="entry name" value="Molecular chaperone DnaK"/>
    <property type="match status" value="1"/>
</dbReference>
<dbReference type="FunFam" id="3.30.420.40:FF:000004">
    <property type="entry name" value="Molecular chaperone DnaK"/>
    <property type="match status" value="1"/>
</dbReference>
<dbReference type="FunFam" id="3.90.640.10:FF:000003">
    <property type="entry name" value="Molecular chaperone DnaK"/>
    <property type="match status" value="1"/>
</dbReference>
<dbReference type="Gene3D" id="1.20.1270.10">
    <property type="match status" value="1"/>
</dbReference>
<dbReference type="Gene3D" id="3.30.420.40">
    <property type="match status" value="2"/>
</dbReference>
<dbReference type="Gene3D" id="3.90.640.10">
    <property type="entry name" value="Actin, Chain A, domain 4"/>
    <property type="match status" value="1"/>
</dbReference>
<dbReference type="Gene3D" id="2.60.34.10">
    <property type="entry name" value="Substrate Binding Domain Of DNAk, Chain A, domain 1"/>
    <property type="match status" value="1"/>
</dbReference>
<dbReference type="HAMAP" id="MF_00332">
    <property type="entry name" value="DnaK"/>
    <property type="match status" value="1"/>
</dbReference>
<dbReference type="InterPro" id="IPR043129">
    <property type="entry name" value="ATPase_NBD"/>
</dbReference>
<dbReference type="InterPro" id="IPR012725">
    <property type="entry name" value="Chaperone_DnaK"/>
</dbReference>
<dbReference type="InterPro" id="IPR018181">
    <property type="entry name" value="Heat_shock_70_CS"/>
</dbReference>
<dbReference type="InterPro" id="IPR029048">
    <property type="entry name" value="HSP70_C_sf"/>
</dbReference>
<dbReference type="InterPro" id="IPR029047">
    <property type="entry name" value="HSP70_peptide-bd_sf"/>
</dbReference>
<dbReference type="InterPro" id="IPR013126">
    <property type="entry name" value="Hsp_70_fam"/>
</dbReference>
<dbReference type="NCBIfam" id="NF001413">
    <property type="entry name" value="PRK00290.1"/>
    <property type="match status" value="1"/>
</dbReference>
<dbReference type="NCBIfam" id="NF003520">
    <property type="entry name" value="PRK05183.1"/>
    <property type="match status" value="1"/>
</dbReference>
<dbReference type="NCBIfam" id="TIGR02350">
    <property type="entry name" value="prok_dnaK"/>
    <property type="match status" value="1"/>
</dbReference>
<dbReference type="PANTHER" id="PTHR19375">
    <property type="entry name" value="HEAT SHOCK PROTEIN 70KDA"/>
    <property type="match status" value="1"/>
</dbReference>
<dbReference type="Pfam" id="PF00012">
    <property type="entry name" value="HSP70"/>
    <property type="match status" value="1"/>
</dbReference>
<dbReference type="PRINTS" id="PR00301">
    <property type="entry name" value="HEATSHOCK70"/>
</dbReference>
<dbReference type="SUPFAM" id="SSF53067">
    <property type="entry name" value="Actin-like ATPase domain"/>
    <property type="match status" value="2"/>
</dbReference>
<dbReference type="SUPFAM" id="SSF100934">
    <property type="entry name" value="Heat shock protein 70kD (HSP70), C-terminal subdomain"/>
    <property type="match status" value="1"/>
</dbReference>
<dbReference type="SUPFAM" id="SSF100920">
    <property type="entry name" value="Heat shock protein 70kD (HSP70), peptide-binding domain"/>
    <property type="match status" value="1"/>
</dbReference>
<dbReference type="PROSITE" id="PS00297">
    <property type="entry name" value="HSP70_1"/>
    <property type="match status" value="1"/>
</dbReference>
<dbReference type="PROSITE" id="PS00329">
    <property type="entry name" value="HSP70_2"/>
    <property type="match status" value="1"/>
</dbReference>
<dbReference type="PROSITE" id="PS01036">
    <property type="entry name" value="HSP70_3"/>
    <property type="match status" value="1"/>
</dbReference>
<reference key="1">
    <citation type="journal article" date="2004" name="PLoS Biol.">
        <title>Phylogenomics of the reproductive parasite Wolbachia pipientis wMel: a streamlined genome overrun by mobile genetic elements.</title>
        <authorList>
            <person name="Wu M."/>
            <person name="Sun L.V."/>
            <person name="Vamathevan J.J."/>
            <person name="Riegler M."/>
            <person name="DeBoy R.T."/>
            <person name="Brownlie J.C."/>
            <person name="McGraw E.A."/>
            <person name="Martin W."/>
            <person name="Esser C."/>
            <person name="Ahmadinejad N."/>
            <person name="Wiegand C."/>
            <person name="Madupu R."/>
            <person name="Beanan M.J."/>
            <person name="Brinkac L.M."/>
            <person name="Daugherty S.C."/>
            <person name="Durkin A.S."/>
            <person name="Kolonay J.F."/>
            <person name="Nelson W.C."/>
            <person name="Mohamoud Y."/>
            <person name="Lee P."/>
            <person name="Berry K.J."/>
            <person name="Young M.B."/>
            <person name="Utterback T.R."/>
            <person name="Weidman J.F."/>
            <person name="Nierman W.C."/>
            <person name="Paulsen I.T."/>
            <person name="Nelson K.E."/>
            <person name="Tettelin H."/>
            <person name="O'Neill S.L."/>
            <person name="Eisen J.A."/>
        </authorList>
    </citation>
    <scope>NUCLEOTIDE SEQUENCE [LARGE SCALE GENOMIC DNA]</scope>
</reference>
<gene>
    <name evidence="1" type="primary">dnaK</name>
    <name type="ordered locus">WD_0928</name>
</gene>
<comment type="function">
    <text evidence="1">Acts as a chaperone.</text>
</comment>
<comment type="induction">
    <text evidence="1">By stress conditions e.g. heat shock.</text>
</comment>
<comment type="similarity">
    <text evidence="1">Belongs to the heat shock protein 70 family.</text>
</comment>
<protein>
    <recommendedName>
        <fullName evidence="1">Chaperone protein DnaK</fullName>
    </recommendedName>
    <alternativeName>
        <fullName evidence="1">HSP70</fullName>
    </alternativeName>
    <alternativeName>
        <fullName evidence="1">Heat shock 70 kDa protein</fullName>
    </alternativeName>
    <alternativeName>
        <fullName evidence="1">Heat shock protein 70</fullName>
    </alternativeName>
</protein>
<organism>
    <name type="scientific">Wolbachia pipientis wMel</name>
    <dbReference type="NCBI Taxonomy" id="163164"/>
    <lineage>
        <taxon>Bacteria</taxon>
        <taxon>Pseudomonadati</taxon>
        <taxon>Pseudomonadota</taxon>
        <taxon>Alphaproteobacteria</taxon>
        <taxon>Rickettsiales</taxon>
        <taxon>Anaplasmataceae</taxon>
        <taxon>Wolbachieae</taxon>
        <taxon>Wolbachia</taxon>
    </lineage>
</organism>